<feature type="chain" id="PRO_0000452039" description="Transcription factor WRKY19">
    <location>
        <begin position="1"/>
        <end position="277"/>
    </location>
</feature>
<feature type="DNA-binding region" description="WRKY" evidence="1">
    <location>
        <begin position="100"/>
        <end position="168"/>
    </location>
</feature>
<feature type="sequence conflict" description="In Ref. 3; AAU44093." evidence="5" ref="3">
    <original>K</original>
    <variation>Q</variation>
    <location>
        <position position="85"/>
    </location>
</feature>
<dbReference type="EMBL" id="BK005022">
    <property type="protein sequence ID" value="DAA05084.1"/>
    <property type="status" value="ALT_SEQ"/>
    <property type="molecule type" value="Genomic_DNA"/>
</dbReference>
<dbReference type="EMBL" id="HQ858860">
    <property type="protein sequence ID" value="ADX60272.1"/>
    <property type="molecule type" value="mRNA"/>
</dbReference>
<dbReference type="EMBL" id="AC104284">
    <property type="protein sequence ID" value="AAU44093.1"/>
    <property type="molecule type" value="Genomic_DNA"/>
</dbReference>
<dbReference type="EMBL" id="AP008211">
    <property type="protein sequence ID" value="BAF18286.1"/>
    <property type="molecule type" value="Genomic_DNA"/>
</dbReference>
<dbReference type="EMBL" id="AP014961">
    <property type="protein sequence ID" value="BAS95427.1"/>
    <property type="molecule type" value="Genomic_DNA"/>
</dbReference>
<dbReference type="EMBL" id="CM000142">
    <property type="protein sequence ID" value="EEE64756.1"/>
    <property type="molecule type" value="Genomic_DNA"/>
</dbReference>
<dbReference type="EMBL" id="AK108389">
    <property type="protein sequence ID" value="BAG98392.1"/>
    <property type="molecule type" value="mRNA"/>
</dbReference>
<dbReference type="RefSeq" id="XP_015638413.1">
    <property type="nucleotide sequence ID" value="XM_015782927.1"/>
</dbReference>
<dbReference type="SMR" id="Q0DFT7"/>
<dbReference type="FunCoup" id="Q0DFT7">
    <property type="interactions" value="8"/>
</dbReference>
<dbReference type="STRING" id="39947.Q0DFT7"/>
<dbReference type="PaxDb" id="39947-Q0DFT7"/>
<dbReference type="EnsemblPlants" id="Os05t0571200-01">
    <property type="protein sequence ID" value="Os05t0571200-01"/>
    <property type="gene ID" value="Os05g0571200"/>
</dbReference>
<dbReference type="Gramene" id="Os05t0571200-01">
    <property type="protein sequence ID" value="Os05t0571200-01"/>
    <property type="gene ID" value="Os05g0571200"/>
</dbReference>
<dbReference type="KEGG" id="dosa:Os05g0571200"/>
<dbReference type="eggNOG" id="ENOG502R5K9">
    <property type="taxonomic scope" value="Eukaryota"/>
</dbReference>
<dbReference type="HOGENOM" id="CLU_058534_1_0_1"/>
<dbReference type="InParanoid" id="Q0DFT7"/>
<dbReference type="OMA" id="ANSDCQF"/>
<dbReference type="OrthoDB" id="1888929at2759"/>
<dbReference type="Proteomes" id="UP000000763">
    <property type="component" value="Chromosome 5"/>
</dbReference>
<dbReference type="Proteomes" id="UP000007752">
    <property type="component" value="Chromosome 5"/>
</dbReference>
<dbReference type="Proteomes" id="UP000059680">
    <property type="component" value="Chromosome 5"/>
</dbReference>
<dbReference type="GO" id="GO:0005634">
    <property type="term" value="C:nucleus"/>
    <property type="evidence" value="ECO:0000318"/>
    <property type="project" value="GO_Central"/>
</dbReference>
<dbReference type="GO" id="GO:0003700">
    <property type="term" value="F:DNA-binding transcription factor activity"/>
    <property type="evidence" value="ECO:0000318"/>
    <property type="project" value="GO_Central"/>
</dbReference>
<dbReference type="GO" id="GO:0000976">
    <property type="term" value="F:transcription cis-regulatory region binding"/>
    <property type="evidence" value="ECO:0000318"/>
    <property type="project" value="GO_Central"/>
</dbReference>
<dbReference type="GO" id="GO:0006952">
    <property type="term" value="P:defense response"/>
    <property type="evidence" value="ECO:0007669"/>
    <property type="project" value="UniProtKB-KW"/>
</dbReference>
<dbReference type="FunFam" id="2.20.25.80:FF:000009">
    <property type="entry name" value="WRKY transcription factor 53"/>
    <property type="match status" value="1"/>
</dbReference>
<dbReference type="Gene3D" id="2.20.25.80">
    <property type="entry name" value="WRKY domain"/>
    <property type="match status" value="1"/>
</dbReference>
<dbReference type="InterPro" id="IPR003657">
    <property type="entry name" value="WRKY_dom"/>
</dbReference>
<dbReference type="InterPro" id="IPR036576">
    <property type="entry name" value="WRKY_dom_sf"/>
</dbReference>
<dbReference type="InterPro" id="IPR044810">
    <property type="entry name" value="WRKY_plant"/>
</dbReference>
<dbReference type="PANTHER" id="PTHR32096:SF55">
    <property type="entry name" value="TRANSCRIPTION FACTOR WRKY19"/>
    <property type="match status" value="1"/>
</dbReference>
<dbReference type="PANTHER" id="PTHR32096">
    <property type="entry name" value="WRKY TRANSCRIPTION FACTOR 30-RELATED-RELATED"/>
    <property type="match status" value="1"/>
</dbReference>
<dbReference type="Pfam" id="PF03106">
    <property type="entry name" value="WRKY"/>
    <property type="match status" value="1"/>
</dbReference>
<dbReference type="SMART" id="SM00774">
    <property type="entry name" value="WRKY"/>
    <property type="match status" value="1"/>
</dbReference>
<dbReference type="SUPFAM" id="SSF118290">
    <property type="entry name" value="WRKY DNA-binding domain"/>
    <property type="match status" value="1"/>
</dbReference>
<dbReference type="PROSITE" id="PS50811">
    <property type="entry name" value="WRKY"/>
    <property type="match status" value="1"/>
</dbReference>
<accession>Q0DFT7</accession>
<accession>A0A0P0WQV1</accession>
<accession>Q65XL4</accession>
<accession>Q6IER2</accession>
<reference key="1">
    <citation type="journal article" date="2004" name="Plant Physiol.">
        <title>A rice WRKY gene encodes a transcriptional repressor of the gibberellin signaling pathway in aleurone cells.</title>
        <authorList>
            <person name="Zhang Z.-L."/>
            <person name="Xie Z."/>
            <person name="Zou X."/>
            <person name="Casaretto J."/>
            <person name="Ho T.-H.D."/>
            <person name="Shen Q.J."/>
        </authorList>
    </citation>
    <scope>NUCLEOTIDE SEQUENCE [GENOMIC DNA]</scope>
</reference>
<reference key="2">
    <citation type="journal article" date="2009" name="Plant Physiol.">
        <title>GRASSIUS: a platform for comparative regulatory genomics across the grasses.</title>
        <authorList>
            <person name="Yilmaz A."/>
            <person name="Nishiyama M.Y."/>
            <person name="Fuentes B.G."/>
            <person name="Souza G.M."/>
            <person name="Janies D."/>
            <person name="Gray J."/>
            <person name="Grotewold E."/>
        </authorList>
    </citation>
    <scope>NUCLEOTIDE SEQUENCE [MRNA]</scope>
</reference>
<reference key="3">
    <citation type="journal article" date="2005" name="Mol. Genet. Genomics">
        <title>A fine physical map of the rice chromosome 5.</title>
        <authorList>
            <person name="Cheng C.-H."/>
            <person name="Chung M.C."/>
            <person name="Liu S.-M."/>
            <person name="Chen S.-K."/>
            <person name="Kao F.Y."/>
            <person name="Lin S.-J."/>
            <person name="Hsiao S.-H."/>
            <person name="Tseng I.C."/>
            <person name="Hsing Y.-I.C."/>
            <person name="Wu H.-P."/>
            <person name="Chen C.-S."/>
            <person name="Shaw J.-F."/>
            <person name="Wu J."/>
            <person name="Matsumoto T."/>
            <person name="Sasaki T."/>
            <person name="Chen H.-C."/>
            <person name="Chow T.-Y."/>
        </authorList>
    </citation>
    <scope>NUCLEOTIDE SEQUENCE [LARGE SCALE GENOMIC DNA]</scope>
    <source>
        <strain>cv. Nipponbare</strain>
    </source>
</reference>
<reference key="4">
    <citation type="journal article" date="2005" name="Nature">
        <title>The map-based sequence of the rice genome.</title>
        <authorList>
            <consortium name="International rice genome sequencing project (IRGSP)"/>
        </authorList>
    </citation>
    <scope>NUCLEOTIDE SEQUENCE [LARGE SCALE GENOMIC DNA]</scope>
    <source>
        <strain>cv. Nipponbare</strain>
    </source>
</reference>
<reference key="5">
    <citation type="journal article" date="2008" name="Nucleic Acids Res.">
        <title>The rice annotation project database (RAP-DB): 2008 update.</title>
        <authorList>
            <consortium name="The rice annotation project (RAP)"/>
        </authorList>
    </citation>
    <scope>GENOME REANNOTATION</scope>
    <source>
        <strain>cv. Nipponbare</strain>
    </source>
</reference>
<reference key="6">
    <citation type="journal article" date="2013" name="Rice">
        <title>Improvement of the Oryza sativa Nipponbare reference genome using next generation sequence and optical map data.</title>
        <authorList>
            <person name="Kawahara Y."/>
            <person name="de la Bastide M."/>
            <person name="Hamilton J.P."/>
            <person name="Kanamori H."/>
            <person name="McCombie W.R."/>
            <person name="Ouyang S."/>
            <person name="Schwartz D.C."/>
            <person name="Tanaka T."/>
            <person name="Wu J."/>
            <person name="Zhou S."/>
            <person name="Childs K.L."/>
            <person name="Davidson R.M."/>
            <person name="Lin H."/>
            <person name="Quesada-Ocampo L."/>
            <person name="Vaillancourt B."/>
            <person name="Sakai H."/>
            <person name="Lee S.S."/>
            <person name="Kim J."/>
            <person name="Numa H."/>
            <person name="Itoh T."/>
            <person name="Buell C.R."/>
            <person name="Matsumoto T."/>
        </authorList>
    </citation>
    <scope>GENOME REANNOTATION</scope>
    <source>
        <strain>cv. Nipponbare</strain>
    </source>
</reference>
<reference key="7">
    <citation type="journal article" date="2005" name="PLoS Biol.">
        <title>The genomes of Oryza sativa: a history of duplications.</title>
        <authorList>
            <person name="Yu J."/>
            <person name="Wang J."/>
            <person name="Lin W."/>
            <person name="Li S."/>
            <person name="Li H."/>
            <person name="Zhou J."/>
            <person name="Ni P."/>
            <person name="Dong W."/>
            <person name="Hu S."/>
            <person name="Zeng C."/>
            <person name="Zhang J."/>
            <person name="Zhang Y."/>
            <person name="Li R."/>
            <person name="Xu Z."/>
            <person name="Li S."/>
            <person name="Li X."/>
            <person name="Zheng H."/>
            <person name="Cong L."/>
            <person name="Lin L."/>
            <person name="Yin J."/>
            <person name="Geng J."/>
            <person name="Li G."/>
            <person name="Shi J."/>
            <person name="Liu J."/>
            <person name="Lv H."/>
            <person name="Li J."/>
            <person name="Wang J."/>
            <person name="Deng Y."/>
            <person name="Ran L."/>
            <person name="Shi X."/>
            <person name="Wang X."/>
            <person name="Wu Q."/>
            <person name="Li C."/>
            <person name="Ren X."/>
            <person name="Wang J."/>
            <person name="Wang X."/>
            <person name="Li D."/>
            <person name="Liu D."/>
            <person name="Zhang X."/>
            <person name="Ji Z."/>
            <person name="Zhao W."/>
            <person name="Sun Y."/>
            <person name="Zhang Z."/>
            <person name="Bao J."/>
            <person name="Han Y."/>
            <person name="Dong L."/>
            <person name="Ji J."/>
            <person name="Chen P."/>
            <person name="Wu S."/>
            <person name="Liu J."/>
            <person name="Xiao Y."/>
            <person name="Bu D."/>
            <person name="Tan J."/>
            <person name="Yang L."/>
            <person name="Ye C."/>
            <person name="Zhang J."/>
            <person name="Xu J."/>
            <person name="Zhou Y."/>
            <person name="Yu Y."/>
            <person name="Zhang B."/>
            <person name="Zhuang S."/>
            <person name="Wei H."/>
            <person name="Liu B."/>
            <person name="Lei M."/>
            <person name="Yu H."/>
            <person name="Li Y."/>
            <person name="Xu H."/>
            <person name="Wei S."/>
            <person name="He X."/>
            <person name="Fang L."/>
            <person name="Zhang Z."/>
            <person name="Zhang Y."/>
            <person name="Huang X."/>
            <person name="Su Z."/>
            <person name="Tong W."/>
            <person name="Li J."/>
            <person name="Tong Z."/>
            <person name="Li S."/>
            <person name="Ye J."/>
            <person name="Wang L."/>
            <person name="Fang L."/>
            <person name="Lei T."/>
            <person name="Chen C.-S."/>
            <person name="Chen H.-C."/>
            <person name="Xu Z."/>
            <person name="Li H."/>
            <person name="Huang H."/>
            <person name="Zhang F."/>
            <person name="Xu H."/>
            <person name="Li N."/>
            <person name="Zhao C."/>
            <person name="Li S."/>
            <person name="Dong L."/>
            <person name="Huang Y."/>
            <person name="Li L."/>
            <person name="Xi Y."/>
            <person name="Qi Q."/>
            <person name="Li W."/>
            <person name="Zhang B."/>
            <person name="Hu W."/>
            <person name="Zhang Y."/>
            <person name="Tian X."/>
            <person name="Jiao Y."/>
            <person name="Liang X."/>
            <person name="Jin J."/>
            <person name="Gao L."/>
            <person name="Zheng W."/>
            <person name="Hao B."/>
            <person name="Liu S.-M."/>
            <person name="Wang W."/>
            <person name="Yuan L."/>
            <person name="Cao M."/>
            <person name="McDermott J."/>
            <person name="Samudrala R."/>
            <person name="Wang J."/>
            <person name="Wong G.K.-S."/>
            <person name="Yang H."/>
        </authorList>
    </citation>
    <scope>NUCLEOTIDE SEQUENCE [LARGE SCALE GENOMIC DNA]</scope>
    <source>
        <strain>cv. Nipponbare</strain>
    </source>
</reference>
<reference key="8">
    <citation type="journal article" date="2003" name="Science">
        <title>Collection, mapping, and annotation of over 28,000 cDNA clones from japonica rice.</title>
        <authorList>
            <consortium name="The rice full-length cDNA consortium"/>
        </authorList>
    </citation>
    <scope>NUCLEOTIDE SEQUENCE [LARGE SCALE MRNA]</scope>
    <source>
        <strain>cv. Nipponbare</strain>
    </source>
</reference>
<reference key="9">
    <citation type="journal article" date="2007" name="Plant Cell">
        <title>Rice WRKY45 plays a crucial role in benzothiadiazole-inducible blast resistance.</title>
        <authorList>
            <person name="Shimono M."/>
            <person name="Sugano S."/>
            <person name="Nakayama A."/>
            <person name="Jiang C.-J."/>
            <person name="Ono K."/>
            <person name="Toki S."/>
            <person name="Takatsuji H."/>
        </authorList>
    </citation>
    <scope>INDUCTION BY BTH</scope>
</reference>
<reference key="10">
    <citation type="journal article" date="2012" name="Plant Cell Physiol.">
        <title>The bHLH Rac Immunity1 (RAI1) is activated by OsRac1 via OsMAPK3 and OsMAPK6 in rice immunity.</title>
        <authorList>
            <person name="Kim S.H."/>
            <person name="Oikawa T."/>
            <person name="Kyozuka J."/>
            <person name="Wong H.L."/>
            <person name="Umemura K."/>
            <person name="Kishi-Kaboshi M."/>
            <person name="Takahashi A."/>
            <person name="Kawano Y."/>
            <person name="Kawasaki T."/>
            <person name="Shimamoto K."/>
        </authorList>
    </citation>
    <scope>FUNCTION</scope>
    <scope>INDUCTION</scope>
</reference>
<gene>
    <name evidence="4" type="primary">WRKY19</name>
    <name evidence="8" type="ordered locus">Os05g0571200</name>
    <name evidence="5" type="ordered locus">LOC_Os05g49620</name>
    <name evidence="7" type="ORF">OJ1735_C10.4</name>
    <name evidence="9" type="ORF">OsJ_19612</name>
</gene>
<comment type="function">
    <text evidence="6">May play a role in defense responses.</text>
</comment>
<comment type="subcellular location">
    <subcellularLocation>
        <location evidence="1">Nucleus</location>
    </subcellularLocation>
</comment>
<comment type="induction">
    <text evidence="2 3">Induced by benzothiadiazole (BTH) (PubMed:17601827). Induced by sphingolipid elicitor and chitin elicitor, and a compatible race of the rice blast fungus Magnaporthe oryzae (PubMed:22437844).</text>
</comment>
<comment type="similarity">
    <text evidence="5">Belongs to the WRKY group III family.</text>
</comment>
<comment type="sequence caution" evidence="5">
    <conflict type="erroneous gene model prediction">
        <sequence resource="EMBL-CDS" id="DAA05084"/>
    </conflict>
</comment>
<name>WRK19_ORYSJ</name>
<protein>
    <recommendedName>
        <fullName evidence="5">Transcription factor WRKY19</fullName>
        <shortName evidence="4">OsWRKY19</shortName>
    </recommendedName>
    <alternativeName>
        <fullName evidence="5">WRKY transcription factor 19</fullName>
    </alternativeName>
</protein>
<keyword id="KW-0238">DNA-binding</keyword>
<keyword id="KW-0539">Nucleus</keyword>
<keyword id="KW-0611">Plant defense</keyword>
<keyword id="KW-1185">Reference proteome</keyword>
<keyword id="KW-0804">Transcription</keyword>
<keyword id="KW-0805">Transcription regulation</keyword>
<organism>
    <name type="scientific">Oryza sativa subsp. japonica</name>
    <name type="common">Rice</name>
    <dbReference type="NCBI Taxonomy" id="39947"/>
    <lineage>
        <taxon>Eukaryota</taxon>
        <taxon>Viridiplantae</taxon>
        <taxon>Streptophyta</taxon>
        <taxon>Embryophyta</taxon>
        <taxon>Tracheophyta</taxon>
        <taxon>Spermatophyta</taxon>
        <taxon>Magnoliopsida</taxon>
        <taxon>Liliopsida</taxon>
        <taxon>Poales</taxon>
        <taxon>Poaceae</taxon>
        <taxon>BOP clade</taxon>
        <taxon>Oryzoideae</taxon>
        <taxon>Oryzeae</taxon>
        <taxon>Oryzinae</taxon>
        <taxon>Oryza</taxon>
        <taxon>Oryza sativa</taxon>
    </lineage>
</organism>
<evidence type="ECO:0000255" key="1">
    <source>
        <dbReference type="PROSITE-ProRule" id="PRU00223"/>
    </source>
</evidence>
<evidence type="ECO:0000269" key="2">
    <source>
    </source>
</evidence>
<evidence type="ECO:0000269" key="3">
    <source>
    </source>
</evidence>
<evidence type="ECO:0000303" key="4">
    <source>
    </source>
</evidence>
<evidence type="ECO:0000305" key="5"/>
<evidence type="ECO:0000305" key="6">
    <source>
    </source>
</evidence>
<evidence type="ECO:0000312" key="7">
    <source>
        <dbReference type="EMBL" id="AAU44093.1"/>
    </source>
</evidence>
<evidence type="ECO:0000312" key="8">
    <source>
        <dbReference type="EMBL" id="BAS95427.1"/>
    </source>
</evidence>
<evidence type="ECO:0000312" key="9">
    <source>
        <dbReference type="EMBL" id="EEE64756.1"/>
    </source>
</evidence>
<sequence length="277" mass="29872">MVELCGGEGEGQIMLATELAQLRAMARELEAKMDPDRVAARELCRALASSVDRSIRLAASCFPPPEHPPPAAGNAGRDAAFKKRKGMAKVRRQVRVTSVQDTASLDDGLSWRKYGQKDILGAKYPRAYFRCTHRHTQGCNATKQVQRADGDPLLFDVVYLGDHTCGQAAVAAAAQSAPPEHAGQEQQRQSSLLAAGTEGIHQQVVAEPMAAPFLFTSTAAGGVDDGYFSFISPANSDCQFSSDFSAGSVGVDMDHEARFEDLFSSTLEFFQSEIQNL</sequence>
<proteinExistence type="evidence at transcript level"/>